<sequence length="362" mass="39025">MTQCYAEITGWGKCLPPATLSNHDLSTFLDTSDEWIQSRTGIEQRRISHVNTSDLATVAAQHAIACAGVSVEEIDLIIVATCSPDSLIPNIASRVQQNLGIPSAAAFDLNAACTGFLYGLETATRLMQASHYRHALVIGAERLSFYLDWTKRDTAVLFGDGAGAVVLSKTEQKVGLQDAQIGCDAQGRDILAVPKFGTAMDRFDADNGYWAFDFVGKEIFKRAVRGMGAAAQQVLARSGLSTEEIDVVIPHQANIRIIQTLCDLAGIAQDKAFVNIHRYGNTSAATVPIALCEALEQGKIKPHDDLLVAAFGAGLTWGAGHIRWGERITPLGKSDAQLPSCDHTALDLLSKAIEHCKRHQSE</sequence>
<accession>Q9KLJ3</accession>
<dbReference type="EC" id="2.3.1.180" evidence="1"/>
<dbReference type="EMBL" id="AE003853">
    <property type="protein sequence ID" value="AAF96649.1"/>
    <property type="status" value="ALT_INIT"/>
    <property type="molecule type" value="Genomic_DNA"/>
</dbReference>
<dbReference type="PIR" id="A82423">
    <property type="entry name" value="A82423"/>
</dbReference>
<dbReference type="RefSeq" id="NP_233137.2">
    <property type="nucleotide sequence ID" value="NC_002506.1"/>
</dbReference>
<dbReference type="RefSeq" id="WP_000189735.1">
    <property type="nucleotide sequence ID" value="NZ_LT906615.1"/>
</dbReference>
<dbReference type="PDB" id="4WZU">
    <property type="method" value="X-ray"/>
    <property type="resolution" value="1.88 A"/>
    <property type="chains" value="A=1-362"/>
</dbReference>
<dbReference type="PDB" id="4X0O">
    <property type="method" value="X-ray"/>
    <property type="resolution" value="2.20 A"/>
    <property type="chains" value="A/B/C/D/E/F/G/H=1-362"/>
</dbReference>
<dbReference type="PDB" id="4X9K">
    <property type="method" value="X-ray"/>
    <property type="resolution" value="1.61 A"/>
    <property type="chains" value="A=1-362"/>
</dbReference>
<dbReference type="PDB" id="4X9O">
    <property type="method" value="X-ray"/>
    <property type="resolution" value="2.30 A"/>
    <property type="chains" value="A/B=1-362"/>
</dbReference>
<dbReference type="PDB" id="5KP2">
    <property type="method" value="X-ray"/>
    <property type="resolution" value="2.00 A"/>
    <property type="chains" value="A/B=1-359"/>
</dbReference>
<dbReference type="PDB" id="5V0P">
    <property type="method" value="X-ray"/>
    <property type="resolution" value="2.16 A"/>
    <property type="chains" value="A/B=1-362"/>
</dbReference>
<dbReference type="PDBsum" id="4WZU"/>
<dbReference type="PDBsum" id="4X0O"/>
<dbReference type="PDBsum" id="4X9K"/>
<dbReference type="PDBsum" id="4X9O"/>
<dbReference type="PDBsum" id="5KP2"/>
<dbReference type="PDBsum" id="5V0P"/>
<dbReference type="SMR" id="Q9KLJ3"/>
<dbReference type="STRING" id="243277.VC_A0751"/>
<dbReference type="DNASU" id="2611892"/>
<dbReference type="EnsemblBacteria" id="AAF96649">
    <property type="protein sequence ID" value="AAF96649"/>
    <property type="gene ID" value="VC_A0751"/>
</dbReference>
<dbReference type="KEGG" id="vch:VC_A0751"/>
<dbReference type="PATRIC" id="fig|243277.26.peg.3377"/>
<dbReference type="eggNOG" id="COG0332">
    <property type="taxonomic scope" value="Bacteria"/>
</dbReference>
<dbReference type="HOGENOM" id="CLU_039592_3_0_6"/>
<dbReference type="UniPathway" id="UPA00094"/>
<dbReference type="EvolutionaryTrace" id="Q9KLJ3"/>
<dbReference type="Proteomes" id="UP000000584">
    <property type="component" value="Chromosome 2"/>
</dbReference>
<dbReference type="GO" id="GO:0005737">
    <property type="term" value="C:cytoplasm"/>
    <property type="evidence" value="ECO:0007669"/>
    <property type="project" value="UniProtKB-SubCell"/>
</dbReference>
<dbReference type="GO" id="GO:0004315">
    <property type="term" value="F:3-oxoacyl-[acyl-carrier-protein] synthase activity"/>
    <property type="evidence" value="ECO:0007669"/>
    <property type="project" value="InterPro"/>
</dbReference>
<dbReference type="GO" id="GO:0033818">
    <property type="term" value="F:beta-ketoacyl-acyl-carrier-protein synthase III activity"/>
    <property type="evidence" value="ECO:0007669"/>
    <property type="project" value="UniProtKB-UniRule"/>
</dbReference>
<dbReference type="GO" id="GO:0006633">
    <property type="term" value="P:fatty acid biosynthetic process"/>
    <property type="evidence" value="ECO:0007669"/>
    <property type="project" value="UniProtKB-UniRule"/>
</dbReference>
<dbReference type="CDD" id="cd00830">
    <property type="entry name" value="KAS_III"/>
    <property type="match status" value="1"/>
</dbReference>
<dbReference type="FunFam" id="3.40.47.10:FF:000004">
    <property type="entry name" value="3-oxoacyl-[acyl-carrier-protein] synthase 3"/>
    <property type="match status" value="1"/>
</dbReference>
<dbReference type="Gene3D" id="3.40.47.10">
    <property type="match status" value="1"/>
</dbReference>
<dbReference type="HAMAP" id="MF_01815">
    <property type="entry name" value="FabH"/>
    <property type="match status" value="1"/>
</dbReference>
<dbReference type="InterPro" id="IPR013747">
    <property type="entry name" value="ACP_syn_III_C"/>
</dbReference>
<dbReference type="InterPro" id="IPR013751">
    <property type="entry name" value="ACP_syn_III_N"/>
</dbReference>
<dbReference type="InterPro" id="IPR004655">
    <property type="entry name" value="FabH"/>
</dbReference>
<dbReference type="InterPro" id="IPR016039">
    <property type="entry name" value="Thiolase-like"/>
</dbReference>
<dbReference type="NCBIfam" id="TIGR00747">
    <property type="entry name" value="fabH"/>
    <property type="match status" value="1"/>
</dbReference>
<dbReference type="NCBIfam" id="NF006829">
    <property type="entry name" value="PRK09352.1"/>
    <property type="match status" value="1"/>
</dbReference>
<dbReference type="PANTHER" id="PTHR43091">
    <property type="entry name" value="3-OXOACYL-[ACYL-CARRIER-PROTEIN] SYNTHASE"/>
    <property type="match status" value="1"/>
</dbReference>
<dbReference type="PANTHER" id="PTHR43091:SF2">
    <property type="entry name" value="BETA-KETOACYL-[ACYL-CARRIER-PROTEIN] SYNTHASE III 2"/>
    <property type="match status" value="1"/>
</dbReference>
<dbReference type="Pfam" id="PF08545">
    <property type="entry name" value="ACP_syn_III"/>
    <property type="match status" value="1"/>
</dbReference>
<dbReference type="Pfam" id="PF08541">
    <property type="entry name" value="ACP_syn_III_C"/>
    <property type="match status" value="1"/>
</dbReference>
<dbReference type="SUPFAM" id="SSF53901">
    <property type="entry name" value="Thiolase-like"/>
    <property type="match status" value="1"/>
</dbReference>
<comment type="function">
    <text evidence="1">Catalyzes the condensation reaction of fatty acid synthesis by the addition to an acyl acceptor of two carbons from malonyl-ACP. Catalyzes the first condensation reaction which initiates fatty acid synthesis and may therefore play a role in governing the total rate of fatty acid production. Possesses both acetoacetyl-ACP synthase and acetyl transacylase activities. Its substrate specificity determines the biosynthesis of branched-chain and/or straight-chain of fatty acids.</text>
</comment>
<comment type="catalytic activity">
    <reaction evidence="1">
        <text>malonyl-[ACP] + acetyl-CoA + H(+) = 3-oxobutanoyl-[ACP] + CO2 + CoA</text>
        <dbReference type="Rhea" id="RHEA:12080"/>
        <dbReference type="Rhea" id="RHEA-COMP:9623"/>
        <dbReference type="Rhea" id="RHEA-COMP:9625"/>
        <dbReference type="ChEBI" id="CHEBI:15378"/>
        <dbReference type="ChEBI" id="CHEBI:16526"/>
        <dbReference type="ChEBI" id="CHEBI:57287"/>
        <dbReference type="ChEBI" id="CHEBI:57288"/>
        <dbReference type="ChEBI" id="CHEBI:78449"/>
        <dbReference type="ChEBI" id="CHEBI:78450"/>
        <dbReference type="EC" id="2.3.1.180"/>
    </reaction>
</comment>
<comment type="pathway">
    <text evidence="1">Lipid metabolism; fatty acid biosynthesis.</text>
</comment>
<comment type="subunit">
    <text evidence="1">Homodimer.</text>
</comment>
<comment type="subcellular location">
    <subcellularLocation>
        <location evidence="1">Cytoplasm</location>
    </subcellularLocation>
</comment>
<comment type="domain">
    <text evidence="1">The last Arg residue of the ACP-binding site is essential for the weak association between ACP/AcpP and FabH.</text>
</comment>
<comment type="similarity">
    <text evidence="1">Belongs to the thiolase-like superfamily. FabH family.</text>
</comment>
<comment type="sequence caution" evidence="2">
    <conflict type="erroneous initiation">
        <sequence resource="EMBL-CDS" id="AAF96649"/>
    </conflict>
</comment>
<proteinExistence type="evidence at protein level"/>
<name>FABH2_VIBCH</name>
<evidence type="ECO:0000255" key="1">
    <source>
        <dbReference type="HAMAP-Rule" id="MF_01815"/>
    </source>
</evidence>
<evidence type="ECO:0000305" key="2"/>
<evidence type="ECO:0007829" key="3">
    <source>
        <dbReference type="PDB" id="4X9K"/>
    </source>
</evidence>
<keyword id="KW-0002">3D-structure</keyword>
<keyword id="KW-0012">Acyltransferase</keyword>
<keyword id="KW-0963">Cytoplasm</keyword>
<keyword id="KW-0275">Fatty acid biosynthesis</keyword>
<keyword id="KW-0276">Fatty acid metabolism</keyword>
<keyword id="KW-0444">Lipid biosynthesis</keyword>
<keyword id="KW-0443">Lipid metabolism</keyword>
<keyword id="KW-0511">Multifunctional enzyme</keyword>
<keyword id="KW-1185">Reference proteome</keyword>
<keyword id="KW-0808">Transferase</keyword>
<organism>
    <name type="scientific">Vibrio cholerae serotype O1 (strain ATCC 39315 / El Tor Inaba N16961)</name>
    <dbReference type="NCBI Taxonomy" id="243277"/>
    <lineage>
        <taxon>Bacteria</taxon>
        <taxon>Pseudomonadati</taxon>
        <taxon>Pseudomonadota</taxon>
        <taxon>Gammaproteobacteria</taxon>
        <taxon>Vibrionales</taxon>
        <taxon>Vibrionaceae</taxon>
        <taxon>Vibrio</taxon>
    </lineage>
</organism>
<protein>
    <recommendedName>
        <fullName evidence="1">Beta-ketoacyl-[acyl-carrier-protein] synthase III 2</fullName>
        <shortName evidence="1">Beta-ketoacyl-ACP synthase III 2</shortName>
        <shortName evidence="1">KAS III 2</shortName>
        <ecNumber evidence="1">2.3.1.180</ecNumber>
    </recommendedName>
    <alternativeName>
        <fullName evidence="1">3-oxoacyl-[acyl-carrier-protein] synthase 3 2</fullName>
    </alternativeName>
    <alternativeName>
        <fullName evidence="1">3-oxoacyl-[acyl-carrier-protein] synthase III 2</fullName>
    </alternativeName>
</protein>
<gene>
    <name evidence="1" type="primary">fabH2</name>
    <name type="ordered locus">VC_A0751</name>
</gene>
<reference key="1">
    <citation type="journal article" date="2000" name="Nature">
        <title>DNA sequence of both chromosomes of the cholera pathogen Vibrio cholerae.</title>
        <authorList>
            <person name="Heidelberg J.F."/>
            <person name="Eisen J.A."/>
            <person name="Nelson W.C."/>
            <person name="Clayton R.A."/>
            <person name="Gwinn M.L."/>
            <person name="Dodson R.J."/>
            <person name="Haft D.H."/>
            <person name="Hickey E.K."/>
            <person name="Peterson J.D."/>
            <person name="Umayam L.A."/>
            <person name="Gill S.R."/>
            <person name="Nelson K.E."/>
            <person name="Read T.D."/>
            <person name="Tettelin H."/>
            <person name="Richardson D.L."/>
            <person name="Ermolaeva M.D."/>
            <person name="Vamathevan J.J."/>
            <person name="Bass S."/>
            <person name="Qin H."/>
            <person name="Dragoi I."/>
            <person name="Sellers P."/>
            <person name="McDonald L.A."/>
            <person name="Utterback T.R."/>
            <person name="Fleischmann R.D."/>
            <person name="Nierman W.C."/>
            <person name="White O."/>
            <person name="Salzberg S.L."/>
            <person name="Smith H.O."/>
            <person name="Colwell R.R."/>
            <person name="Mekalanos J.J."/>
            <person name="Venter J.C."/>
            <person name="Fraser C.M."/>
        </authorList>
    </citation>
    <scope>NUCLEOTIDE SEQUENCE [LARGE SCALE GENOMIC DNA]</scope>
    <source>
        <strain>ATCC 39315 / El Tor Inaba N16961</strain>
    </source>
</reference>
<feature type="chain" id="PRO_0000110503" description="Beta-ketoacyl-[acyl-carrier-protein] synthase III 2">
    <location>
        <begin position="1"/>
        <end position="362"/>
    </location>
</feature>
<feature type="region of interest" description="ACP-binding" evidence="1">
    <location>
        <begin position="252"/>
        <end position="256"/>
    </location>
</feature>
<feature type="active site" evidence="1">
    <location>
        <position position="113"/>
    </location>
</feature>
<feature type="active site" evidence="1">
    <location>
        <position position="251"/>
    </location>
</feature>
<feature type="active site" evidence="1">
    <location>
        <position position="281"/>
    </location>
</feature>
<feature type="strand" evidence="3">
    <location>
        <begin position="5"/>
        <end position="14"/>
    </location>
</feature>
<feature type="strand" evidence="3">
    <location>
        <begin position="19"/>
        <end position="21"/>
    </location>
</feature>
<feature type="helix" evidence="3">
    <location>
        <begin position="22"/>
        <end position="26"/>
    </location>
</feature>
<feature type="helix" evidence="3">
    <location>
        <begin position="33"/>
        <end position="40"/>
    </location>
</feature>
<feature type="strand" evidence="3">
    <location>
        <begin position="44"/>
        <end position="46"/>
    </location>
</feature>
<feature type="helix" evidence="3">
    <location>
        <begin position="52"/>
        <end position="67"/>
    </location>
</feature>
<feature type="turn" evidence="3">
    <location>
        <begin position="71"/>
        <end position="73"/>
    </location>
</feature>
<feature type="strand" evidence="3">
    <location>
        <begin position="74"/>
        <end position="80"/>
    </location>
</feature>
<feature type="strand" evidence="3">
    <location>
        <begin position="87"/>
        <end position="89"/>
    </location>
</feature>
<feature type="helix" evidence="3">
    <location>
        <begin position="92"/>
        <end position="99"/>
    </location>
</feature>
<feature type="strand" evidence="3">
    <location>
        <begin position="105"/>
        <end position="109"/>
    </location>
</feature>
<feature type="helix" evidence="3">
    <location>
        <begin position="112"/>
        <end position="114"/>
    </location>
</feature>
<feature type="helix" evidence="3">
    <location>
        <begin position="115"/>
        <end position="129"/>
    </location>
</feature>
<feature type="strand" evidence="3">
    <location>
        <begin position="134"/>
        <end position="142"/>
    </location>
</feature>
<feature type="helix" evidence="3">
    <location>
        <begin position="143"/>
        <end position="146"/>
    </location>
</feature>
<feature type="helix" evidence="3">
    <location>
        <begin position="152"/>
        <end position="155"/>
    </location>
</feature>
<feature type="strand" evidence="3">
    <location>
        <begin position="160"/>
        <end position="173"/>
    </location>
</feature>
<feature type="strand" evidence="3">
    <location>
        <begin position="175"/>
        <end position="183"/>
    </location>
</feature>
<feature type="helix" evidence="3">
    <location>
        <begin position="185"/>
        <end position="187"/>
    </location>
</feature>
<feature type="strand" evidence="3">
    <location>
        <begin position="190"/>
        <end position="192"/>
    </location>
</feature>
<feature type="turn" evidence="3">
    <location>
        <begin position="205"/>
        <end position="208"/>
    </location>
</feature>
<feature type="helix" evidence="3">
    <location>
        <begin position="216"/>
        <end position="238"/>
    </location>
</feature>
<feature type="helix" evidence="3">
    <location>
        <begin position="242"/>
        <end position="244"/>
    </location>
</feature>
<feature type="strand" evidence="3">
    <location>
        <begin position="247"/>
        <end position="250"/>
    </location>
</feature>
<feature type="helix" evidence="3">
    <location>
        <begin position="255"/>
        <end position="265"/>
    </location>
</feature>
<feature type="helix" evidence="3">
    <location>
        <begin position="269"/>
        <end position="271"/>
    </location>
</feature>
<feature type="helix" evidence="3">
    <location>
        <begin position="276"/>
        <end position="279"/>
    </location>
</feature>
<feature type="helix" evidence="3">
    <location>
        <begin position="283"/>
        <end position="285"/>
    </location>
</feature>
<feature type="helix" evidence="3">
    <location>
        <begin position="286"/>
        <end position="296"/>
    </location>
</feature>
<feature type="strand" evidence="3">
    <location>
        <begin position="305"/>
        <end position="312"/>
    </location>
</feature>
<feature type="helix" evidence="3">
    <location>
        <begin position="313"/>
        <end position="315"/>
    </location>
</feature>
<feature type="strand" evidence="3">
    <location>
        <begin position="316"/>
        <end position="323"/>
    </location>
</feature>
<feature type="helix" evidence="3">
    <location>
        <begin position="345"/>
        <end position="359"/>
    </location>
</feature>